<accession>A6KXA1</accession>
<keyword id="KW-0143">Chaperone</keyword>
<keyword id="KW-0963">Cytoplasm</keyword>
<sequence>MNIKPLADRVLILPAPAEEKTIGGIIIPDTAKEKPLQGEVVAIGNGTKDEEMVLHVGDQVLYGKYSGTELEHDGKKYLIMRQSDVLAVLG</sequence>
<feature type="chain" id="PRO_1000025212" description="Co-chaperonin GroES">
    <location>
        <begin position="1"/>
        <end position="90"/>
    </location>
</feature>
<organism>
    <name type="scientific">Phocaeicola vulgatus (strain ATCC 8482 / DSM 1447 / JCM 5826 / CCUG 4940 / NBRC 14291 / NCTC 11154)</name>
    <name type="common">Bacteroides vulgatus</name>
    <dbReference type="NCBI Taxonomy" id="435590"/>
    <lineage>
        <taxon>Bacteria</taxon>
        <taxon>Pseudomonadati</taxon>
        <taxon>Bacteroidota</taxon>
        <taxon>Bacteroidia</taxon>
        <taxon>Bacteroidales</taxon>
        <taxon>Bacteroidaceae</taxon>
        <taxon>Phocaeicola</taxon>
    </lineage>
</organism>
<evidence type="ECO:0000255" key="1">
    <source>
        <dbReference type="HAMAP-Rule" id="MF_00580"/>
    </source>
</evidence>
<protein>
    <recommendedName>
        <fullName evidence="1">Co-chaperonin GroES</fullName>
    </recommendedName>
    <alternativeName>
        <fullName evidence="1">10 kDa chaperonin</fullName>
    </alternativeName>
    <alternativeName>
        <fullName evidence="1">Chaperonin-10</fullName>
        <shortName evidence="1">Cpn10</shortName>
    </alternativeName>
</protein>
<reference key="1">
    <citation type="journal article" date="2007" name="PLoS Biol.">
        <title>Evolution of symbiotic bacteria in the distal human intestine.</title>
        <authorList>
            <person name="Xu J."/>
            <person name="Mahowald M.A."/>
            <person name="Ley R.E."/>
            <person name="Lozupone C.A."/>
            <person name="Hamady M."/>
            <person name="Martens E.C."/>
            <person name="Henrissat B."/>
            <person name="Coutinho P.M."/>
            <person name="Minx P."/>
            <person name="Latreille P."/>
            <person name="Cordum H."/>
            <person name="Van Brunt A."/>
            <person name="Kim K."/>
            <person name="Fulton R.S."/>
            <person name="Fulton L.A."/>
            <person name="Clifton S.W."/>
            <person name="Wilson R.K."/>
            <person name="Knight R.D."/>
            <person name="Gordon J.I."/>
        </authorList>
    </citation>
    <scope>NUCLEOTIDE SEQUENCE [LARGE SCALE GENOMIC DNA]</scope>
    <source>
        <strain>ATCC 8482 / DSM 1447 / JCM 5826 / CCUG 4940 / NBRC 14291 / NCTC 11154</strain>
    </source>
</reference>
<proteinExistence type="inferred from homology"/>
<name>CH10_PHOV8</name>
<gene>
    <name evidence="1" type="primary">groES</name>
    <name evidence="1" type="synonym">groS</name>
    <name type="ordered locus">BVU_0346</name>
</gene>
<dbReference type="EMBL" id="CP000139">
    <property type="protein sequence ID" value="ABR38065.1"/>
    <property type="molecule type" value="Genomic_DNA"/>
</dbReference>
<dbReference type="RefSeq" id="WP_005842331.1">
    <property type="nucleotide sequence ID" value="NZ_JANSWM010000030.1"/>
</dbReference>
<dbReference type="SMR" id="A6KXA1"/>
<dbReference type="STRING" id="435590.BVU_0346"/>
<dbReference type="PaxDb" id="435590-BVU_0346"/>
<dbReference type="KEGG" id="bvu:BVU_0346"/>
<dbReference type="eggNOG" id="COG0234">
    <property type="taxonomic scope" value="Bacteria"/>
</dbReference>
<dbReference type="HOGENOM" id="CLU_132825_2_0_10"/>
<dbReference type="BioCyc" id="BVUL435590:G1G59-364-MONOMER"/>
<dbReference type="Proteomes" id="UP000002861">
    <property type="component" value="Chromosome"/>
</dbReference>
<dbReference type="GO" id="GO:0005737">
    <property type="term" value="C:cytoplasm"/>
    <property type="evidence" value="ECO:0007669"/>
    <property type="project" value="UniProtKB-SubCell"/>
</dbReference>
<dbReference type="GO" id="GO:0005524">
    <property type="term" value="F:ATP binding"/>
    <property type="evidence" value="ECO:0007669"/>
    <property type="project" value="InterPro"/>
</dbReference>
<dbReference type="GO" id="GO:0046872">
    <property type="term" value="F:metal ion binding"/>
    <property type="evidence" value="ECO:0007669"/>
    <property type="project" value="TreeGrafter"/>
</dbReference>
<dbReference type="GO" id="GO:0044183">
    <property type="term" value="F:protein folding chaperone"/>
    <property type="evidence" value="ECO:0007669"/>
    <property type="project" value="InterPro"/>
</dbReference>
<dbReference type="GO" id="GO:0051087">
    <property type="term" value="F:protein-folding chaperone binding"/>
    <property type="evidence" value="ECO:0007669"/>
    <property type="project" value="TreeGrafter"/>
</dbReference>
<dbReference type="GO" id="GO:0051082">
    <property type="term" value="F:unfolded protein binding"/>
    <property type="evidence" value="ECO:0007669"/>
    <property type="project" value="TreeGrafter"/>
</dbReference>
<dbReference type="GO" id="GO:0051085">
    <property type="term" value="P:chaperone cofactor-dependent protein refolding"/>
    <property type="evidence" value="ECO:0007669"/>
    <property type="project" value="TreeGrafter"/>
</dbReference>
<dbReference type="CDD" id="cd00320">
    <property type="entry name" value="cpn10"/>
    <property type="match status" value="1"/>
</dbReference>
<dbReference type="FunFam" id="2.30.33.40:FF:000004">
    <property type="entry name" value="10 kDa chaperonin"/>
    <property type="match status" value="1"/>
</dbReference>
<dbReference type="Gene3D" id="2.30.33.40">
    <property type="entry name" value="GroES chaperonin"/>
    <property type="match status" value="1"/>
</dbReference>
<dbReference type="HAMAP" id="MF_00580">
    <property type="entry name" value="CH10"/>
    <property type="match status" value="1"/>
</dbReference>
<dbReference type="InterPro" id="IPR020818">
    <property type="entry name" value="Chaperonin_GroES"/>
</dbReference>
<dbReference type="InterPro" id="IPR037124">
    <property type="entry name" value="Chaperonin_GroES_sf"/>
</dbReference>
<dbReference type="InterPro" id="IPR011032">
    <property type="entry name" value="GroES-like_sf"/>
</dbReference>
<dbReference type="NCBIfam" id="NF001531">
    <property type="entry name" value="PRK00364.2-2"/>
    <property type="match status" value="1"/>
</dbReference>
<dbReference type="NCBIfam" id="NF001533">
    <property type="entry name" value="PRK00364.2-4"/>
    <property type="match status" value="1"/>
</dbReference>
<dbReference type="PANTHER" id="PTHR10772">
    <property type="entry name" value="10 KDA HEAT SHOCK PROTEIN"/>
    <property type="match status" value="1"/>
</dbReference>
<dbReference type="PANTHER" id="PTHR10772:SF58">
    <property type="entry name" value="CO-CHAPERONIN GROES"/>
    <property type="match status" value="1"/>
</dbReference>
<dbReference type="Pfam" id="PF00166">
    <property type="entry name" value="Cpn10"/>
    <property type="match status" value="1"/>
</dbReference>
<dbReference type="PRINTS" id="PR00297">
    <property type="entry name" value="CHAPERONIN10"/>
</dbReference>
<dbReference type="SMART" id="SM00883">
    <property type="entry name" value="Cpn10"/>
    <property type="match status" value="1"/>
</dbReference>
<dbReference type="SUPFAM" id="SSF50129">
    <property type="entry name" value="GroES-like"/>
    <property type="match status" value="1"/>
</dbReference>
<comment type="function">
    <text evidence="1">Together with the chaperonin GroEL, plays an essential role in assisting protein folding. The GroEL-GroES system forms a nano-cage that allows encapsulation of the non-native substrate proteins and provides a physical environment optimized to promote and accelerate protein folding. GroES binds to the apical surface of the GroEL ring, thereby capping the opening of the GroEL channel.</text>
</comment>
<comment type="subunit">
    <text evidence="1">Heptamer of 7 subunits arranged in a ring. Interacts with the chaperonin GroEL.</text>
</comment>
<comment type="subcellular location">
    <subcellularLocation>
        <location evidence="1">Cytoplasm</location>
    </subcellularLocation>
</comment>
<comment type="similarity">
    <text evidence="1">Belongs to the GroES chaperonin family.</text>
</comment>